<organism>
    <name type="scientific">Oceanobacillus iheyensis (strain DSM 14371 / CIP 107618 / JCM 11309 / KCTC 3954 / HTE831)</name>
    <dbReference type="NCBI Taxonomy" id="221109"/>
    <lineage>
        <taxon>Bacteria</taxon>
        <taxon>Bacillati</taxon>
        <taxon>Bacillota</taxon>
        <taxon>Bacilli</taxon>
        <taxon>Bacillales</taxon>
        <taxon>Bacillaceae</taxon>
        <taxon>Oceanobacillus</taxon>
    </lineage>
</organism>
<keyword id="KW-0029">Amino-acid transport</keyword>
<keyword id="KW-0067">ATP-binding</keyword>
<keyword id="KW-1003">Cell membrane</keyword>
<keyword id="KW-0472">Membrane</keyword>
<keyword id="KW-0547">Nucleotide-binding</keyword>
<keyword id="KW-1185">Reference proteome</keyword>
<keyword id="KW-1278">Translocase</keyword>
<keyword id="KW-0813">Transport</keyword>
<accession>Q8ELA5</accession>
<dbReference type="EC" id="7.4.2.11" evidence="1"/>
<dbReference type="EMBL" id="BA000028">
    <property type="protein sequence ID" value="BAC15282.1"/>
    <property type="molecule type" value="Genomic_DNA"/>
</dbReference>
<dbReference type="RefSeq" id="WP_011067723.1">
    <property type="nucleotide sequence ID" value="NC_004193.1"/>
</dbReference>
<dbReference type="SMR" id="Q8ELA5"/>
<dbReference type="STRING" id="221109.gene:10735578"/>
<dbReference type="KEGG" id="oih:OB3326"/>
<dbReference type="eggNOG" id="COG1135">
    <property type="taxonomic scope" value="Bacteria"/>
</dbReference>
<dbReference type="HOGENOM" id="CLU_000604_1_3_9"/>
<dbReference type="OrthoDB" id="9802264at2"/>
<dbReference type="PhylomeDB" id="Q8ELA5"/>
<dbReference type="Proteomes" id="UP000000822">
    <property type="component" value="Chromosome"/>
</dbReference>
<dbReference type="GO" id="GO:0005886">
    <property type="term" value="C:plasma membrane"/>
    <property type="evidence" value="ECO:0007669"/>
    <property type="project" value="UniProtKB-SubCell"/>
</dbReference>
<dbReference type="GO" id="GO:0033232">
    <property type="term" value="F:ABC-type D-methionine transporter activity"/>
    <property type="evidence" value="ECO:0007669"/>
    <property type="project" value="UniProtKB-EC"/>
</dbReference>
<dbReference type="GO" id="GO:0005524">
    <property type="term" value="F:ATP binding"/>
    <property type="evidence" value="ECO:0007669"/>
    <property type="project" value="UniProtKB-KW"/>
</dbReference>
<dbReference type="GO" id="GO:0016887">
    <property type="term" value="F:ATP hydrolysis activity"/>
    <property type="evidence" value="ECO:0007669"/>
    <property type="project" value="InterPro"/>
</dbReference>
<dbReference type="CDD" id="cd03258">
    <property type="entry name" value="ABC_MetN_methionine_transporter"/>
    <property type="match status" value="1"/>
</dbReference>
<dbReference type="FunFam" id="3.40.50.300:FF:000056">
    <property type="entry name" value="Cell division ATP-binding protein FtsE"/>
    <property type="match status" value="1"/>
</dbReference>
<dbReference type="Gene3D" id="3.30.70.260">
    <property type="match status" value="1"/>
</dbReference>
<dbReference type="Gene3D" id="3.40.50.300">
    <property type="entry name" value="P-loop containing nucleotide triphosphate hydrolases"/>
    <property type="match status" value="1"/>
</dbReference>
<dbReference type="InterPro" id="IPR003593">
    <property type="entry name" value="AAA+_ATPase"/>
</dbReference>
<dbReference type="InterPro" id="IPR003439">
    <property type="entry name" value="ABC_transporter-like_ATP-bd"/>
</dbReference>
<dbReference type="InterPro" id="IPR017871">
    <property type="entry name" value="ABC_transporter-like_CS"/>
</dbReference>
<dbReference type="InterPro" id="IPR045865">
    <property type="entry name" value="ACT-like_dom_sf"/>
</dbReference>
<dbReference type="InterPro" id="IPR041701">
    <property type="entry name" value="MetN_ABC"/>
</dbReference>
<dbReference type="InterPro" id="IPR050086">
    <property type="entry name" value="MetN_ABC_transporter-like"/>
</dbReference>
<dbReference type="InterPro" id="IPR018449">
    <property type="entry name" value="NIL_domain"/>
</dbReference>
<dbReference type="InterPro" id="IPR027417">
    <property type="entry name" value="P-loop_NTPase"/>
</dbReference>
<dbReference type="PANTHER" id="PTHR43166">
    <property type="entry name" value="AMINO ACID IMPORT ATP-BINDING PROTEIN"/>
    <property type="match status" value="1"/>
</dbReference>
<dbReference type="PANTHER" id="PTHR43166:SF30">
    <property type="entry name" value="METHIONINE IMPORT ATP-BINDING PROTEIN METN"/>
    <property type="match status" value="1"/>
</dbReference>
<dbReference type="Pfam" id="PF00005">
    <property type="entry name" value="ABC_tran"/>
    <property type="match status" value="1"/>
</dbReference>
<dbReference type="Pfam" id="PF09383">
    <property type="entry name" value="NIL"/>
    <property type="match status" value="1"/>
</dbReference>
<dbReference type="SMART" id="SM00382">
    <property type="entry name" value="AAA"/>
    <property type="match status" value="1"/>
</dbReference>
<dbReference type="SMART" id="SM00930">
    <property type="entry name" value="NIL"/>
    <property type="match status" value="1"/>
</dbReference>
<dbReference type="SUPFAM" id="SSF55021">
    <property type="entry name" value="ACT-like"/>
    <property type="match status" value="1"/>
</dbReference>
<dbReference type="SUPFAM" id="SSF52540">
    <property type="entry name" value="P-loop containing nucleoside triphosphate hydrolases"/>
    <property type="match status" value="1"/>
</dbReference>
<dbReference type="PROSITE" id="PS00211">
    <property type="entry name" value="ABC_TRANSPORTER_1"/>
    <property type="match status" value="1"/>
</dbReference>
<dbReference type="PROSITE" id="PS50893">
    <property type="entry name" value="ABC_TRANSPORTER_2"/>
    <property type="match status" value="1"/>
</dbReference>
<dbReference type="PROSITE" id="PS51264">
    <property type="entry name" value="METN"/>
    <property type="match status" value="1"/>
</dbReference>
<gene>
    <name evidence="1" type="primary">metN4</name>
    <name type="ordered locus">OB3326</name>
</gene>
<reference key="1">
    <citation type="journal article" date="2002" name="Nucleic Acids Res.">
        <title>Genome sequence of Oceanobacillus iheyensis isolated from the Iheya Ridge and its unexpected adaptive capabilities to extreme environments.</title>
        <authorList>
            <person name="Takami H."/>
            <person name="Takaki Y."/>
            <person name="Uchiyama I."/>
        </authorList>
    </citation>
    <scope>NUCLEOTIDE SEQUENCE [LARGE SCALE GENOMIC DNA]</scope>
    <source>
        <strain>DSM 14371 / CIP 107618 / JCM 11309 / KCTC 3954 / HTE831</strain>
    </source>
</reference>
<protein>
    <recommendedName>
        <fullName evidence="1">Methionine import ATP-binding protein MetN 4</fullName>
        <ecNumber evidence="1">7.4.2.11</ecNumber>
    </recommendedName>
</protein>
<proteinExistence type="inferred from homology"/>
<sequence>MIELTNITKTFAGKQGDIQALKDVSLSVGKGEIYGVIGYSGAGKSTLIRCVNLLEQPDQGSVKVNDVELTTLKSGKLRETRSHIGMIFQGFNLLKTATVYDNIAIPLKLTGLNKKAVKDRVQKYLDIVGLADKHDAYPSELSGGQKQRVAIARALSHEPEVLLSDEATSALDPDTTEAILDLLLRINKELGITILLITHEMNVIQRVCDRVAVMENGEVIEEGYTKDIFISPQLRTTKRFVNSLFSHDIPDDLIDGLSENGQVAKLSFFGESSGDPALALVTKKYDIYPNILSGSITRIKDEAFGQLLVHFKGEQAEINDSFQFLQDQQVHVKGVTYDGENQRVS</sequence>
<evidence type="ECO:0000255" key="1">
    <source>
        <dbReference type="HAMAP-Rule" id="MF_01719"/>
    </source>
</evidence>
<comment type="function">
    <text evidence="1">Part of the ABC transporter complex MetNIQ involved in methionine import. Responsible for energy coupling to the transport system.</text>
</comment>
<comment type="catalytic activity">
    <reaction evidence="1">
        <text>L-methionine(out) + ATP + H2O = L-methionine(in) + ADP + phosphate + H(+)</text>
        <dbReference type="Rhea" id="RHEA:29779"/>
        <dbReference type="ChEBI" id="CHEBI:15377"/>
        <dbReference type="ChEBI" id="CHEBI:15378"/>
        <dbReference type="ChEBI" id="CHEBI:30616"/>
        <dbReference type="ChEBI" id="CHEBI:43474"/>
        <dbReference type="ChEBI" id="CHEBI:57844"/>
        <dbReference type="ChEBI" id="CHEBI:456216"/>
        <dbReference type="EC" id="7.4.2.11"/>
    </reaction>
</comment>
<comment type="catalytic activity">
    <reaction evidence="1">
        <text>D-methionine(out) + ATP + H2O = D-methionine(in) + ADP + phosphate + H(+)</text>
        <dbReference type="Rhea" id="RHEA:29767"/>
        <dbReference type="ChEBI" id="CHEBI:15377"/>
        <dbReference type="ChEBI" id="CHEBI:15378"/>
        <dbReference type="ChEBI" id="CHEBI:30616"/>
        <dbReference type="ChEBI" id="CHEBI:43474"/>
        <dbReference type="ChEBI" id="CHEBI:57932"/>
        <dbReference type="ChEBI" id="CHEBI:456216"/>
        <dbReference type="EC" id="7.4.2.11"/>
    </reaction>
</comment>
<comment type="subunit">
    <text evidence="1">The complex is composed of two ATP-binding proteins (MetN), two transmembrane proteins (MetI) and a solute-binding protein (MetQ).</text>
</comment>
<comment type="subcellular location">
    <subcellularLocation>
        <location evidence="1">Cell membrane</location>
        <topology evidence="1">Peripheral membrane protein</topology>
    </subcellularLocation>
</comment>
<comment type="similarity">
    <text evidence="1">Belongs to the ABC transporter superfamily. Methionine importer (TC 3.A.1.24) family.</text>
</comment>
<feature type="chain" id="PRO_0000270339" description="Methionine import ATP-binding protein MetN 4">
    <location>
        <begin position="1"/>
        <end position="345"/>
    </location>
</feature>
<feature type="domain" description="ABC transporter" evidence="1">
    <location>
        <begin position="2"/>
        <end position="241"/>
    </location>
</feature>
<feature type="binding site" evidence="1">
    <location>
        <begin position="38"/>
        <end position="45"/>
    </location>
    <ligand>
        <name>ATP</name>
        <dbReference type="ChEBI" id="CHEBI:30616"/>
    </ligand>
</feature>
<name>METN4_OCEIH</name>